<keyword id="KW-0143">Chaperone</keyword>
<keyword id="KW-0963">Cytoplasm</keyword>
<keyword id="KW-0235">DNA replication</keyword>
<keyword id="KW-0479">Metal-binding</keyword>
<keyword id="KW-0677">Repeat</keyword>
<keyword id="KW-0346">Stress response</keyword>
<keyword id="KW-0862">Zinc</keyword>
<keyword id="KW-0863">Zinc-finger</keyword>
<evidence type="ECO:0000255" key="1">
    <source>
        <dbReference type="HAMAP-Rule" id="MF_01152"/>
    </source>
</evidence>
<protein>
    <recommendedName>
        <fullName evidence="1">Chaperone protein DnaJ</fullName>
    </recommendedName>
</protein>
<name>DNAJ_BORPD</name>
<reference key="1">
    <citation type="journal article" date="2008" name="BMC Genomics">
        <title>The missing link: Bordetella petrii is endowed with both the metabolic versatility of environmental bacteria and virulence traits of pathogenic Bordetellae.</title>
        <authorList>
            <person name="Gross R."/>
            <person name="Guzman C.A."/>
            <person name="Sebaihia M."/>
            <person name="Martin dos Santos V.A.P."/>
            <person name="Pieper D.H."/>
            <person name="Koebnik R."/>
            <person name="Lechner M."/>
            <person name="Bartels D."/>
            <person name="Buhrmester J."/>
            <person name="Choudhuri J.V."/>
            <person name="Ebensen T."/>
            <person name="Gaigalat L."/>
            <person name="Herrmann S."/>
            <person name="Khachane A.N."/>
            <person name="Larisch C."/>
            <person name="Link S."/>
            <person name="Linke B."/>
            <person name="Meyer F."/>
            <person name="Mormann S."/>
            <person name="Nakunst D."/>
            <person name="Rueckert C."/>
            <person name="Schneiker-Bekel S."/>
            <person name="Schulze K."/>
            <person name="Voerholter F.-J."/>
            <person name="Yevsa T."/>
            <person name="Engle J.T."/>
            <person name="Goldman W.E."/>
            <person name="Puehler A."/>
            <person name="Goebel U.B."/>
            <person name="Goesmann A."/>
            <person name="Bloecker H."/>
            <person name="Kaiser O."/>
            <person name="Martinez-Arias R."/>
        </authorList>
    </citation>
    <scope>NUCLEOTIDE SEQUENCE [LARGE SCALE GENOMIC DNA]</scope>
    <source>
        <strain>ATCC BAA-461 / DSM 12804 / CCUG 43448</strain>
    </source>
</reference>
<dbReference type="EMBL" id="AM902716">
    <property type="protein sequence ID" value="CAP41897.1"/>
    <property type="molecule type" value="Genomic_DNA"/>
</dbReference>
<dbReference type="SMR" id="A9IGC5"/>
<dbReference type="STRING" id="94624.Bpet1558"/>
<dbReference type="KEGG" id="bpt:Bpet1558"/>
<dbReference type="eggNOG" id="COG0484">
    <property type="taxonomic scope" value="Bacteria"/>
</dbReference>
<dbReference type="Proteomes" id="UP000001225">
    <property type="component" value="Chromosome"/>
</dbReference>
<dbReference type="GO" id="GO:0005737">
    <property type="term" value="C:cytoplasm"/>
    <property type="evidence" value="ECO:0007669"/>
    <property type="project" value="UniProtKB-SubCell"/>
</dbReference>
<dbReference type="GO" id="GO:0005524">
    <property type="term" value="F:ATP binding"/>
    <property type="evidence" value="ECO:0007669"/>
    <property type="project" value="InterPro"/>
</dbReference>
<dbReference type="GO" id="GO:0031072">
    <property type="term" value="F:heat shock protein binding"/>
    <property type="evidence" value="ECO:0007669"/>
    <property type="project" value="InterPro"/>
</dbReference>
<dbReference type="GO" id="GO:0051082">
    <property type="term" value="F:unfolded protein binding"/>
    <property type="evidence" value="ECO:0007669"/>
    <property type="project" value="UniProtKB-UniRule"/>
</dbReference>
<dbReference type="GO" id="GO:0008270">
    <property type="term" value="F:zinc ion binding"/>
    <property type="evidence" value="ECO:0007669"/>
    <property type="project" value="UniProtKB-UniRule"/>
</dbReference>
<dbReference type="GO" id="GO:0051085">
    <property type="term" value="P:chaperone cofactor-dependent protein refolding"/>
    <property type="evidence" value="ECO:0007669"/>
    <property type="project" value="TreeGrafter"/>
</dbReference>
<dbReference type="GO" id="GO:0006260">
    <property type="term" value="P:DNA replication"/>
    <property type="evidence" value="ECO:0007669"/>
    <property type="project" value="UniProtKB-KW"/>
</dbReference>
<dbReference type="GO" id="GO:0042026">
    <property type="term" value="P:protein refolding"/>
    <property type="evidence" value="ECO:0007669"/>
    <property type="project" value="TreeGrafter"/>
</dbReference>
<dbReference type="GO" id="GO:0009408">
    <property type="term" value="P:response to heat"/>
    <property type="evidence" value="ECO:0007669"/>
    <property type="project" value="InterPro"/>
</dbReference>
<dbReference type="CDD" id="cd06257">
    <property type="entry name" value="DnaJ"/>
    <property type="match status" value="1"/>
</dbReference>
<dbReference type="CDD" id="cd10747">
    <property type="entry name" value="DnaJ_C"/>
    <property type="match status" value="1"/>
</dbReference>
<dbReference type="CDD" id="cd10719">
    <property type="entry name" value="DnaJ_zf"/>
    <property type="match status" value="1"/>
</dbReference>
<dbReference type="FunFam" id="1.10.287.110:FF:000031">
    <property type="entry name" value="Molecular chaperone DnaJ"/>
    <property type="match status" value="1"/>
</dbReference>
<dbReference type="FunFam" id="2.10.230.10:FF:000002">
    <property type="entry name" value="Molecular chaperone DnaJ"/>
    <property type="match status" value="1"/>
</dbReference>
<dbReference type="FunFam" id="2.60.260.20:FF:000004">
    <property type="entry name" value="Molecular chaperone DnaJ"/>
    <property type="match status" value="1"/>
</dbReference>
<dbReference type="Gene3D" id="1.10.287.110">
    <property type="entry name" value="DnaJ domain"/>
    <property type="match status" value="1"/>
</dbReference>
<dbReference type="Gene3D" id="2.10.230.10">
    <property type="entry name" value="Heat shock protein DnaJ, cysteine-rich domain"/>
    <property type="match status" value="1"/>
</dbReference>
<dbReference type="Gene3D" id="2.60.260.20">
    <property type="entry name" value="Urease metallochaperone UreE, N-terminal domain"/>
    <property type="match status" value="2"/>
</dbReference>
<dbReference type="HAMAP" id="MF_01152">
    <property type="entry name" value="DnaJ"/>
    <property type="match status" value="1"/>
</dbReference>
<dbReference type="InterPro" id="IPR012724">
    <property type="entry name" value="DnaJ"/>
</dbReference>
<dbReference type="InterPro" id="IPR002939">
    <property type="entry name" value="DnaJ_C"/>
</dbReference>
<dbReference type="InterPro" id="IPR001623">
    <property type="entry name" value="DnaJ_domain"/>
</dbReference>
<dbReference type="InterPro" id="IPR018253">
    <property type="entry name" value="DnaJ_domain_CS"/>
</dbReference>
<dbReference type="InterPro" id="IPR008971">
    <property type="entry name" value="HSP40/DnaJ_pept-bd"/>
</dbReference>
<dbReference type="InterPro" id="IPR001305">
    <property type="entry name" value="HSP_DnaJ_Cys-rich_dom"/>
</dbReference>
<dbReference type="InterPro" id="IPR036410">
    <property type="entry name" value="HSP_DnaJ_Cys-rich_dom_sf"/>
</dbReference>
<dbReference type="InterPro" id="IPR036869">
    <property type="entry name" value="J_dom_sf"/>
</dbReference>
<dbReference type="NCBIfam" id="TIGR02349">
    <property type="entry name" value="DnaJ_bact"/>
    <property type="match status" value="1"/>
</dbReference>
<dbReference type="NCBIfam" id="NF008035">
    <property type="entry name" value="PRK10767.1"/>
    <property type="match status" value="1"/>
</dbReference>
<dbReference type="PANTHER" id="PTHR43096:SF48">
    <property type="entry name" value="CHAPERONE PROTEIN DNAJ"/>
    <property type="match status" value="1"/>
</dbReference>
<dbReference type="PANTHER" id="PTHR43096">
    <property type="entry name" value="DNAJ HOMOLOG 1, MITOCHONDRIAL-RELATED"/>
    <property type="match status" value="1"/>
</dbReference>
<dbReference type="Pfam" id="PF00226">
    <property type="entry name" value="DnaJ"/>
    <property type="match status" value="1"/>
</dbReference>
<dbReference type="Pfam" id="PF01556">
    <property type="entry name" value="DnaJ_C"/>
    <property type="match status" value="1"/>
</dbReference>
<dbReference type="Pfam" id="PF00684">
    <property type="entry name" value="DnaJ_CXXCXGXG"/>
    <property type="match status" value="1"/>
</dbReference>
<dbReference type="PRINTS" id="PR00625">
    <property type="entry name" value="JDOMAIN"/>
</dbReference>
<dbReference type="SMART" id="SM00271">
    <property type="entry name" value="DnaJ"/>
    <property type="match status" value="1"/>
</dbReference>
<dbReference type="SUPFAM" id="SSF46565">
    <property type="entry name" value="Chaperone J-domain"/>
    <property type="match status" value="1"/>
</dbReference>
<dbReference type="SUPFAM" id="SSF57938">
    <property type="entry name" value="DnaJ/Hsp40 cysteine-rich domain"/>
    <property type="match status" value="1"/>
</dbReference>
<dbReference type="SUPFAM" id="SSF49493">
    <property type="entry name" value="HSP40/DnaJ peptide-binding domain"/>
    <property type="match status" value="2"/>
</dbReference>
<dbReference type="PROSITE" id="PS00636">
    <property type="entry name" value="DNAJ_1"/>
    <property type="match status" value="1"/>
</dbReference>
<dbReference type="PROSITE" id="PS50076">
    <property type="entry name" value="DNAJ_2"/>
    <property type="match status" value="1"/>
</dbReference>
<dbReference type="PROSITE" id="PS51188">
    <property type="entry name" value="ZF_CR"/>
    <property type="match status" value="1"/>
</dbReference>
<proteinExistence type="inferred from homology"/>
<comment type="function">
    <text evidence="1">Participates actively in the response to hyperosmotic and heat shock by preventing the aggregation of stress-denatured proteins and by disaggregating proteins, also in an autonomous, DnaK-independent fashion. Unfolded proteins bind initially to DnaJ; upon interaction with the DnaJ-bound protein, DnaK hydrolyzes its bound ATP, resulting in the formation of a stable complex. GrpE releases ADP from DnaK; ATP binding to DnaK triggers the release of the substrate protein, thus completing the reaction cycle. Several rounds of ATP-dependent interactions between DnaJ, DnaK and GrpE are required for fully efficient folding. Also involved, together with DnaK and GrpE, in the DNA replication of plasmids through activation of initiation proteins.</text>
</comment>
<comment type="cofactor">
    <cofactor evidence="1">
        <name>Zn(2+)</name>
        <dbReference type="ChEBI" id="CHEBI:29105"/>
    </cofactor>
    <text evidence="1">Binds 2 Zn(2+) ions per monomer.</text>
</comment>
<comment type="subunit">
    <text evidence="1">Homodimer.</text>
</comment>
<comment type="subcellular location">
    <subcellularLocation>
        <location evidence="1">Cytoplasm</location>
    </subcellularLocation>
</comment>
<comment type="domain">
    <text evidence="1">The J domain is necessary and sufficient to stimulate DnaK ATPase activity. Zinc center 1 plays an important role in the autonomous, DnaK-independent chaperone activity of DnaJ. Zinc center 2 is essential for interaction with DnaK and for DnaJ activity.</text>
</comment>
<comment type="similarity">
    <text evidence="1">Belongs to the DnaJ family.</text>
</comment>
<gene>
    <name evidence="1" type="primary">dnaJ</name>
    <name type="ordered locus">Bpet1558</name>
</gene>
<organism>
    <name type="scientific">Bordetella petrii (strain ATCC BAA-461 / DSM 12804 / CCUG 43448)</name>
    <dbReference type="NCBI Taxonomy" id="340100"/>
    <lineage>
        <taxon>Bacteria</taxon>
        <taxon>Pseudomonadati</taxon>
        <taxon>Pseudomonadota</taxon>
        <taxon>Betaproteobacteria</taxon>
        <taxon>Burkholderiales</taxon>
        <taxon>Alcaligenaceae</taxon>
        <taxon>Bordetella</taxon>
    </lineage>
</organism>
<sequence length="374" mass="40409">MAKRDYYEVLGVAKNATDDELKKAYRKLAMKHHPDRNPDNKDAEEKFKEIKEAYEVLGDEQKRAAYDRYGHAGVDPNAAGMGGAGMGGGFADAFGDIFGEIFGGAGGRRGGAQVYRGADLKYALEITLEQAAHGFDTEIRVPSWEHCDTCHGSGAKPGTSPKTCRTCGGSGAVRMQQGFFSVQQTCPTCHGTGKEITDPCPSCDGVGRIRRNKTLQVKIPAGIDDGMRIRSSGNGEPGINGGPSGDLYVEIHIKPHKIFQRDGDDLHCELTIPFTTAALGGELQVPTLGGKAEISIPEGTQSGKTFRLRGKGIRGVRASYPGDLYCHVAVETPVRLSDEQKAILRQFETSLNDGGDRHSPQSKSWTDRVKEFFS</sequence>
<feature type="chain" id="PRO_1000137662" description="Chaperone protein DnaJ">
    <location>
        <begin position="1"/>
        <end position="374"/>
    </location>
</feature>
<feature type="domain" description="J" evidence="1">
    <location>
        <begin position="5"/>
        <end position="70"/>
    </location>
</feature>
<feature type="repeat" description="CXXCXGXG motif">
    <location>
        <begin position="147"/>
        <end position="154"/>
    </location>
</feature>
<feature type="repeat" description="CXXCXGXG motif">
    <location>
        <begin position="164"/>
        <end position="171"/>
    </location>
</feature>
<feature type="repeat" description="CXXCXGXG motif">
    <location>
        <begin position="186"/>
        <end position="193"/>
    </location>
</feature>
<feature type="repeat" description="CXXCXGXG motif">
    <location>
        <begin position="200"/>
        <end position="207"/>
    </location>
</feature>
<feature type="zinc finger region" description="CR-type" evidence="1">
    <location>
        <begin position="134"/>
        <end position="212"/>
    </location>
</feature>
<feature type="binding site" evidence="1">
    <location>
        <position position="147"/>
    </location>
    <ligand>
        <name>Zn(2+)</name>
        <dbReference type="ChEBI" id="CHEBI:29105"/>
        <label>1</label>
    </ligand>
</feature>
<feature type="binding site" evidence="1">
    <location>
        <position position="150"/>
    </location>
    <ligand>
        <name>Zn(2+)</name>
        <dbReference type="ChEBI" id="CHEBI:29105"/>
        <label>1</label>
    </ligand>
</feature>
<feature type="binding site" evidence="1">
    <location>
        <position position="164"/>
    </location>
    <ligand>
        <name>Zn(2+)</name>
        <dbReference type="ChEBI" id="CHEBI:29105"/>
        <label>2</label>
    </ligand>
</feature>
<feature type="binding site" evidence="1">
    <location>
        <position position="167"/>
    </location>
    <ligand>
        <name>Zn(2+)</name>
        <dbReference type="ChEBI" id="CHEBI:29105"/>
        <label>2</label>
    </ligand>
</feature>
<feature type="binding site" evidence="1">
    <location>
        <position position="186"/>
    </location>
    <ligand>
        <name>Zn(2+)</name>
        <dbReference type="ChEBI" id="CHEBI:29105"/>
        <label>2</label>
    </ligand>
</feature>
<feature type="binding site" evidence="1">
    <location>
        <position position="189"/>
    </location>
    <ligand>
        <name>Zn(2+)</name>
        <dbReference type="ChEBI" id="CHEBI:29105"/>
        <label>2</label>
    </ligand>
</feature>
<feature type="binding site" evidence="1">
    <location>
        <position position="200"/>
    </location>
    <ligand>
        <name>Zn(2+)</name>
        <dbReference type="ChEBI" id="CHEBI:29105"/>
        <label>1</label>
    </ligand>
</feature>
<feature type="binding site" evidence="1">
    <location>
        <position position="203"/>
    </location>
    <ligand>
        <name>Zn(2+)</name>
        <dbReference type="ChEBI" id="CHEBI:29105"/>
        <label>1</label>
    </ligand>
</feature>
<accession>A9IGC5</accession>